<sequence length="330" mass="36246">MQPQSVLHSGYFHPLLRAWQTATTTLNASNLIYPIFVTDVPDDIQPIASLPGVARYGVNRLEEMLRPLVEEGLRCVLIFGIPSRVPKDERGSAADSEESPAIEAIHLLRKTFPNLLVACDICLCPYTSHGHCGLLSENGAFRAEESRQRLAEVALAYAKAGCQVVAPSDMMDGRVEAIKEALMAHGLGNRVSVMSYSAKFASCFYGPFRDAAQSSPAFGDRRCYQLPPGARGLALRAVDRDVREGADVLMVKPGMPYLDIVREVKDKHPDLPLAVYHVSGEFAMLWHGAQAGAFDLKAAVLEAMTAFRRAGADIIITYYTPQLLQWLKKE</sequence>
<reference key="1">
    <citation type="submission" date="2003-10" db="EMBL/GenBank/DDBJ databases">
        <title>Isolation and characterization of cDNA for macaque neurological disease genes.</title>
        <authorList>
            <person name="Kusuda J."/>
            <person name="Osada N."/>
            <person name="Tanuma R."/>
            <person name="Hirata M."/>
            <person name="Sugano S."/>
            <person name="Hashimoto K."/>
        </authorList>
    </citation>
    <scope>NUCLEOTIDE SEQUENCE [LARGE SCALE MRNA]</scope>
    <source>
        <tissue>Occipital cortex</tissue>
    </source>
</reference>
<organism>
    <name type="scientific">Macaca fascicularis</name>
    <name type="common">Crab-eating macaque</name>
    <name type="synonym">Cynomolgus monkey</name>
    <dbReference type="NCBI Taxonomy" id="9541"/>
    <lineage>
        <taxon>Eukaryota</taxon>
        <taxon>Metazoa</taxon>
        <taxon>Chordata</taxon>
        <taxon>Craniata</taxon>
        <taxon>Vertebrata</taxon>
        <taxon>Euteleostomi</taxon>
        <taxon>Mammalia</taxon>
        <taxon>Eutheria</taxon>
        <taxon>Euarchontoglires</taxon>
        <taxon>Primates</taxon>
        <taxon>Haplorrhini</taxon>
        <taxon>Catarrhini</taxon>
        <taxon>Cercopithecidae</taxon>
        <taxon>Cercopithecinae</taxon>
        <taxon>Macaca</taxon>
    </lineage>
</organism>
<dbReference type="EC" id="4.2.1.24"/>
<dbReference type="EMBL" id="AB125148">
    <property type="protein sequence ID" value="BAD51936.1"/>
    <property type="status" value="ALT_SEQ"/>
    <property type="molecule type" value="mRNA"/>
</dbReference>
<dbReference type="SMR" id="Q60HH9"/>
<dbReference type="STRING" id="9541.ENSMFAP00000044557"/>
<dbReference type="eggNOG" id="KOG2794">
    <property type="taxonomic scope" value="Eukaryota"/>
</dbReference>
<dbReference type="UniPathway" id="UPA00251">
    <property type="reaction ID" value="UER00318"/>
</dbReference>
<dbReference type="Proteomes" id="UP000233100">
    <property type="component" value="Unplaced"/>
</dbReference>
<dbReference type="GO" id="GO:0005829">
    <property type="term" value="C:cytosol"/>
    <property type="evidence" value="ECO:0007669"/>
    <property type="project" value="UniProtKB-SubCell"/>
</dbReference>
<dbReference type="GO" id="GO:0004655">
    <property type="term" value="F:porphobilinogen synthase activity"/>
    <property type="evidence" value="ECO:0000250"/>
    <property type="project" value="UniProtKB"/>
</dbReference>
<dbReference type="GO" id="GO:0008270">
    <property type="term" value="F:zinc ion binding"/>
    <property type="evidence" value="ECO:0000250"/>
    <property type="project" value="UniProtKB"/>
</dbReference>
<dbReference type="GO" id="GO:0006783">
    <property type="term" value="P:heme biosynthetic process"/>
    <property type="evidence" value="ECO:0000250"/>
    <property type="project" value="UniProtKB"/>
</dbReference>
<dbReference type="GO" id="GO:0006782">
    <property type="term" value="P:protoporphyrinogen IX biosynthetic process"/>
    <property type="evidence" value="ECO:0007669"/>
    <property type="project" value="UniProtKB-UniPathway"/>
</dbReference>
<dbReference type="CDD" id="cd04824">
    <property type="entry name" value="eu_ALAD_PBGS_cysteine_rich"/>
    <property type="match status" value="1"/>
</dbReference>
<dbReference type="FunFam" id="3.20.20.70:FF:000048">
    <property type="entry name" value="Delta-aminolevulinic acid dehydratase"/>
    <property type="match status" value="1"/>
</dbReference>
<dbReference type="Gene3D" id="3.20.20.70">
    <property type="entry name" value="Aldolase class I"/>
    <property type="match status" value="1"/>
</dbReference>
<dbReference type="InterPro" id="IPR001731">
    <property type="entry name" value="ALAD"/>
</dbReference>
<dbReference type="InterPro" id="IPR030656">
    <property type="entry name" value="ALAD_AS"/>
</dbReference>
<dbReference type="InterPro" id="IPR013785">
    <property type="entry name" value="Aldolase_TIM"/>
</dbReference>
<dbReference type="NCBIfam" id="NF006762">
    <property type="entry name" value="PRK09283.1"/>
    <property type="match status" value="1"/>
</dbReference>
<dbReference type="PANTHER" id="PTHR11458">
    <property type="entry name" value="DELTA-AMINOLEVULINIC ACID DEHYDRATASE"/>
    <property type="match status" value="1"/>
</dbReference>
<dbReference type="PANTHER" id="PTHR11458:SF0">
    <property type="entry name" value="DELTA-AMINOLEVULINIC ACID DEHYDRATASE"/>
    <property type="match status" value="1"/>
</dbReference>
<dbReference type="Pfam" id="PF00490">
    <property type="entry name" value="ALAD"/>
    <property type="match status" value="1"/>
</dbReference>
<dbReference type="PIRSF" id="PIRSF001415">
    <property type="entry name" value="Porphbilin_synth"/>
    <property type="match status" value="1"/>
</dbReference>
<dbReference type="PRINTS" id="PR00144">
    <property type="entry name" value="DALDHYDRTASE"/>
</dbReference>
<dbReference type="SMART" id="SM01004">
    <property type="entry name" value="ALAD"/>
    <property type="match status" value="1"/>
</dbReference>
<dbReference type="SUPFAM" id="SSF51569">
    <property type="entry name" value="Aldolase"/>
    <property type="match status" value="1"/>
</dbReference>
<dbReference type="PROSITE" id="PS00169">
    <property type="entry name" value="D_ALA_DEHYDRATASE"/>
    <property type="match status" value="1"/>
</dbReference>
<gene>
    <name type="primary">ALAD</name>
    <name type="ORF">QorA-10240</name>
</gene>
<name>HEM2_MACFA</name>
<evidence type="ECO:0000250" key="1">
    <source>
        <dbReference type="UniProtKB" id="P10518"/>
    </source>
</evidence>
<evidence type="ECO:0000250" key="2">
    <source>
        <dbReference type="UniProtKB" id="P13716"/>
    </source>
</evidence>
<evidence type="ECO:0000305" key="3"/>
<accession>Q60HH9</accession>
<comment type="function">
    <text evidence="2">Catalyzes an early step in the biosynthesis of tetrapyrroles. Binds two molecules of 5-aminolevulinate per subunit, each at a distinct site, and catalyzes their condensation to form porphobilinogen.</text>
</comment>
<comment type="catalytic activity">
    <reaction evidence="2">
        <text>2 5-aminolevulinate = porphobilinogen + 2 H2O + H(+)</text>
        <dbReference type="Rhea" id="RHEA:24064"/>
        <dbReference type="ChEBI" id="CHEBI:15377"/>
        <dbReference type="ChEBI" id="CHEBI:15378"/>
        <dbReference type="ChEBI" id="CHEBI:58126"/>
        <dbReference type="ChEBI" id="CHEBI:356416"/>
        <dbReference type="EC" id="4.2.1.24"/>
    </reaction>
</comment>
<comment type="cofactor">
    <cofactor evidence="2">
        <name>Zn(2+)</name>
        <dbReference type="ChEBI" id="CHEBI:29105"/>
    </cofactor>
    <text evidence="2">Binds 8 zinc ions per octamer. Requires four zinc ions per octamer for full catalytic activity. Can bind up to 2 zinc ions per subunit.</text>
</comment>
<comment type="activity regulation">
    <text evidence="2">Can alternate between a fully active homooctamer and a low-activity homohexamer. A bound magnesium ion may promote the assembly of the fully active homooctamer. The magnesium-binding site is absent in the low-activity homohexamer. Inhibited by compounds that favor the hexameric state. Inhibited by divalent lead ions. The lead ions partially displace the zinc cofactor.</text>
</comment>
<comment type="pathway">
    <text evidence="2">Porphyrin-containing compound metabolism; protoporphyrin-IX biosynthesis; coproporphyrinogen-III from 5-aminolevulinate: step 1/4.</text>
</comment>
<comment type="subunit">
    <text evidence="2">Homooctamer; active form. Homohexamer; low activity form.</text>
</comment>
<comment type="subcellular location">
    <subcellularLocation>
        <location evidence="1">Cytoplasm</location>
        <location evidence="1">Cytosol</location>
    </subcellularLocation>
</comment>
<comment type="similarity">
    <text evidence="3">Belongs to the ALAD family.</text>
</comment>
<keyword id="KW-0021">Allosteric enzyme</keyword>
<keyword id="KW-0963">Cytoplasm</keyword>
<keyword id="KW-0350">Heme biosynthesis</keyword>
<keyword id="KW-0456">Lyase</keyword>
<keyword id="KW-0479">Metal-binding</keyword>
<keyword id="KW-0597">Phosphoprotein</keyword>
<keyword id="KW-0627">Porphyrin biosynthesis</keyword>
<keyword id="KW-1185">Reference proteome</keyword>
<keyword id="KW-0862">Zinc</keyword>
<feature type="chain" id="PRO_0000140527" description="Delta-aminolevulinic acid dehydratase">
    <location>
        <begin position="1"/>
        <end position="330"/>
    </location>
</feature>
<feature type="active site" description="Schiff-base intermediate with substrate" evidence="2">
    <location>
        <position position="199"/>
    </location>
</feature>
<feature type="active site" description="Schiff-base intermediate with substrate" evidence="2">
    <location>
        <position position="252"/>
    </location>
</feature>
<feature type="binding site" evidence="2">
    <location>
        <position position="122"/>
    </location>
    <ligand>
        <name>Zn(2+)</name>
        <dbReference type="ChEBI" id="CHEBI:29105"/>
        <label>1</label>
        <note>catalytic</note>
    </ligand>
</feature>
<feature type="binding site" evidence="2">
    <location>
        <position position="124"/>
    </location>
    <ligand>
        <name>Zn(2+)</name>
        <dbReference type="ChEBI" id="CHEBI:29105"/>
        <label>1</label>
        <note>catalytic</note>
    </ligand>
</feature>
<feature type="binding site" evidence="2">
    <location>
        <position position="131"/>
    </location>
    <ligand>
        <name>Zn(2+)</name>
        <dbReference type="ChEBI" id="CHEBI:29105"/>
        <label>2</label>
    </ligand>
</feature>
<feature type="binding site" evidence="2">
    <location>
        <position position="132"/>
    </location>
    <ligand>
        <name>Zn(2+)</name>
        <dbReference type="ChEBI" id="CHEBI:29105"/>
        <label>1</label>
        <note>catalytic</note>
    </ligand>
</feature>
<feature type="binding site" evidence="2">
    <location>
        <position position="209"/>
    </location>
    <ligand>
        <name>5-aminolevulinate</name>
        <dbReference type="ChEBI" id="CHEBI:356416"/>
        <label>1</label>
    </ligand>
</feature>
<feature type="binding site" evidence="2">
    <location>
        <position position="221"/>
    </location>
    <ligand>
        <name>5-aminolevulinate</name>
        <dbReference type="ChEBI" id="CHEBI:356416"/>
        <label>1</label>
    </ligand>
</feature>
<feature type="binding site" evidence="2">
    <location>
        <position position="223"/>
    </location>
    <ligand>
        <name>Zn(2+)</name>
        <dbReference type="ChEBI" id="CHEBI:29105"/>
        <label>2</label>
    </ligand>
</feature>
<feature type="binding site" evidence="2">
    <location>
        <position position="279"/>
    </location>
    <ligand>
        <name>5-aminolevulinate</name>
        <dbReference type="ChEBI" id="CHEBI:356416"/>
        <label>2</label>
    </ligand>
</feature>
<feature type="binding site" evidence="2">
    <location>
        <position position="318"/>
    </location>
    <ligand>
        <name>5-aminolevulinate</name>
        <dbReference type="ChEBI" id="CHEBI:356416"/>
        <label>2</label>
    </ligand>
</feature>
<feature type="modified residue" description="N6-succinyllysine" evidence="1">
    <location>
        <position position="199"/>
    </location>
</feature>
<feature type="modified residue" description="Phosphoserine" evidence="1">
    <location>
        <position position="215"/>
    </location>
</feature>
<feature type="modified residue" description="N6-succinyllysine" evidence="1">
    <location>
        <position position="252"/>
    </location>
</feature>
<proteinExistence type="evidence at transcript level"/>
<protein>
    <recommendedName>
        <fullName>Delta-aminolevulinic acid dehydratase</fullName>
        <shortName>ALADH</shortName>
        <ecNumber>4.2.1.24</ecNumber>
    </recommendedName>
    <alternativeName>
        <fullName>Porphobilinogen synthase</fullName>
    </alternativeName>
</protein>